<gene>
    <name evidence="6" type="primary">OR2B6</name>
    <name evidence="6" type="synonym">OR2B1</name>
    <name evidence="6" type="synonym">OR2B1P</name>
    <name evidence="6" type="synonym">OR2B5</name>
    <name type="synonym">OR2B6P</name>
</gene>
<dbReference type="EMBL" id="KP290463">
    <property type="protein sequence ID" value="ALI87627.1"/>
    <property type="molecule type" value="Genomic_DNA"/>
</dbReference>
<dbReference type="EMBL" id="AL133267">
    <property type="status" value="NOT_ANNOTATED_CDS"/>
    <property type="molecule type" value="Genomic_DNA"/>
</dbReference>
<dbReference type="EMBL" id="CH471081">
    <property type="protein sequence ID" value="EAX03127.1"/>
    <property type="molecule type" value="Genomic_DNA"/>
</dbReference>
<dbReference type="EMBL" id="BC109251">
    <property type="protein sequence ID" value="AAI09252.1"/>
    <property type="molecule type" value="mRNA"/>
</dbReference>
<dbReference type="EMBL" id="BC110457">
    <property type="protein sequence ID" value="AAI10458.1"/>
    <property type="molecule type" value="mRNA"/>
</dbReference>
<dbReference type="EMBL" id="U86270">
    <property type="protein sequence ID" value="AAC39628.1"/>
    <property type="molecule type" value="Genomic_DNA"/>
</dbReference>
<dbReference type="EMBL" id="BK004373">
    <property type="protein sequence ID" value="DAA04771.1"/>
    <property type="molecule type" value="Genomic_DNA"/>
</dbReference>
<dbReference type="CCDS" id="CCDS4642.1"/>
<dbReference type="RefSeq" id="NP_036499.1">
    <property type="nucleotide sequence ID" value="NM_012367.1"/>
</dbReference>
<dbReference type="SMR" id="P58173"/>
<dbReference type="FunCoup" id="P58173">
    <property type="interactions" value="456"/>
</dbReference>
<dbReference type="IntAct" id="P58173">
    <property type="interactions" value="1"/>
</dbReference>
<dbReference type="STRING" id="9606.ENSP00000244623"/>
<dbReference type="GlyCosmos" id="P58173">
    <property type="glycosylation" value="1 site, No reported glycans"/>
</dbReference>
<dbReference type="GlyGen" id="P58173">
    <property type="glycosylation" value="1 site"/>
</dbReference>
<dbReference type="iPTMnet" id="P58173"/>
<dbReference type="PhosphoSitePlus" id="P58173"/>
<dbReference type="BioMuta" id="OR2B6"/>
<dbReference type="DMDM" id="14423785"/>
<dbReference type="PaxDb" id="9606-ENSP00000244623"/>
<dbReference type="ProteomicsDB" id="57052"/>
<dbReference type="Antibodypedia" id="67797">
    <property type="antibodies" value="63 antibodies from 16 providers"/>
</dbReference>
<dbReference type="DNASU" id="26212"/>
<dbReference type="Ensembl" id="ENST00000244623.1">
    <property type="protein sequence ID" value="ENSP00000244623.1"/>
    <property type="gene ID" value="ENSG00000124657.1"/>
</dbReference>
<dbReference type="GeneID" id="26212"/>
<dbReference type="KEGG" id="hsa:26212"/>
<dbReference type="MANE-Select" id="ENST00000244623.1">
    <property type="protein sequence ID" value="ENSP00000244623.1"/>
    <property type="RefSeq nucleotide sequence ID" value="NM_012367.1"/>
    <property type="RefSeq protein sequence ID" value="NP_036499.1"/>
</dbReference>
<dbReference type="UCSC" id="uc011dkx.2">
    <property type="organism name" value="human"/>
</dbReference>
<dbReference type="AGR" id="HGNC:8241"/>
<dbReference type="CTD" id="26212"/>
<dbReference type="DisGeNET" id="26212"/>
<dbReference type="GeneCards" id="OR2B6"/>
<dbReference type="HGNC" id="HGNC:8241">
    <property type="gene designation" value="OR2B6"/>
</dbReference>
<dbReference type="HPA" id="ENSG00000124657">
    <property type="expression patterns" value="Not detected"/>
</dbReference>
<dbReference type="neXtProt" id="NX_P58173"/>
<dbReference type="OpenTargets" id="ENSG00000124657"/>
<dbReference type="PharmGKB" id="PA32144"/>
<dbReference type="VEuPathDB" id="HostDB:ENSG00000124657"/>
<dbReference type="eggNOG" id="ENOG502SI2C">
    <property type="taxonomic scope" value="Eukaryota"/>
</dbReference>
<dbReference type="GeneTree" id="ENSGT01130000278264"/>
<dbReference type="HOGENOM" id="CLU_012526_1_2_1"/>
<dbReference type="InParanoid" id="P58173"/>
<dbReference type="OMA" id="QMLVNLC"/>
<dbReference type="OrthoDB" id="5950740at2759"/>
<dbReference type="PAN-GO" id="P58173">
    <property type="GO annotations" value="0 GO annotations based on evolutionary models"/>
</dbReference>
<dbReference type="PhylomeDB" id="P58173"/>
<dbReference type="TreeFam" id="TF336512"/>
<dbReference type="PathwayCommons" id="P58173"/>
<dbReference type="Reactome" id="R-HSA-9752946">
    <property type="pathway name" value="Expression and translocation of olfactory receptors"/>
</dbReference>
<dbReference type="SignaLink" id="P58173"/>
<dbReference type="BioGRID-ORCS" id="26212">
    <property type="hits" value="6 hits in 745 CRISPR screens"/>
</dbReference>
<dbReference type="GeneWiki" id="OR2B6"/>
<dbReference type="GenomeRNAi" id="26212"/>
<dbReference type="Pharos" id="P58173">
    <property type="development level" value="Tdark"/>
</dbReference>
<dbReference type="PRO" id="PR:P58173"/>
<dbReference type="Proteomes" id="UP000005640">
    <property type="component" value="Chromosome 6"/>
</dbReference>
<dbReference type="RNAct" id="P58173">
    <property type="molecule type" value="protein"/>
</dbReference>
<dbReference type="Bgee" id="ENSG00000124657">
    <property type="expression patterns" value="Expressed in mucosa of transverse colon and 49 other cell types or tissues"/>
</dbReference>
<dbReference type="ExpressionAtlas" id="P58173">
    <property type="expression patterns" value="baseline and differential"/>
</dbReference>
<dbReference type="GO" id="GO:0005886">
    <property type="term" value="C:plasma membrane"/>
    <property type="evidence" value="ECO:0000318"/>
    <property type="project" value="GO_Central"/>
</dbReference>
<dbReference type="GO" id="GO:0004930">
    <property type="term" value="F:G protein-coupled receptor activity"/>
    <property type="evidence" value="ECO:0007669"/>
    <property type="project" value="UniProtKB-KW"/>
</dbReference>
<dbReference type="GO" id="GO:0004984">
    <property type="term" value="F:olfactory receptor activity"/>
    <property type="evidence" value="ECO:0000318"/>
    <property type="project" value="GO_Central"/>
</dbReference>
<dbReference type="GO" id="GO:0050911">
    <property type="term" value="P:detection of chemical stimulus involved in sensory perception of smell"/>
    <property type="evidence" value="ECO:0000318"/>
    <property type="project" value="GO_Central"/>
</dbReference>
<dbReference type="CDD" id="cd15947">
    <property type="entry name" value="7tmA_OR2B-like"/>
    <property type="match status" value="1"/>
</dbReference>
<dbReference type="FunFam" id="1.10.1220.70:FF:000001">
    <property type="entry name" value="Olfactory receptor"/>
    <property type="match status" value="1"/>
</dbReference>
<dbReference type="FunFam" id="1.20.1070.10:FF:000005">
    <property type="entry name" value="Olfactory receptor"/>
    <property type="match status" value="1"/>
</dbReference>
<dbReference type="Gene3D" id="1.20.1070.10">
    <property type="entry name" value="Rhodopsin 7-helix transmembrane proteins"/>
    <property type="match status" value="1"/>
</dbReference>
<dbReference type="InterPro" id="IPR000276">
    <property type="entry name" value="GPCR_Rhodpsn"/>
</dbReference>
<dbReference type="InterPro" id="IPR017452">
    <property type="entry name" value="GPCR_Rhodpsn_7TM"/>
</dbReference>
<dbReference type="InterPro" id="IPR000725">
    <property type="entry name" value="Olfact_rcpt"/>
</dbReference>
<dbReference type="PANTHER" id="PTHR26453">
    <property type="entry name" value="OLFACTORY RECEPTOR"/>
    <property type="match status" value="1"/>
</dbReference>
<dbReference type="Pfam" id="PF13853">
    <property type="entry name" value="7tm_4"/>
    <property type="match status" value="1"/>
</dbReference>
<dbReference type="PRINTS" id="PR00237">
    <property type="entry name" value="GPCRRHODOPSN"/>
</dbReference>
<dbReference type="PRINTS" id="PR00245">
    <property type="entry name" value="OLFACTORYR"/>
</dbReference>
<dbReference type="SUPFAM" id="SSF81321">
    <property type="entry name" value="Family A G protein-coupled receptor-like"/>
    <property type="match status" value="1"/>
</dbReference>
<dbReference type="PROSITE" id="PS00237">
    <property type="entry name" value="G_PROTEIN_RECEP_F1_1"/>
    <property type="match status" value="1"/>
</dbReference>
<dbReference type="PROSITE" id="PS50262">
    <property type="entry name" value="G_PROTEIN_RECEP_F1_2"/>
    <property type="match status" value="1"/>
</dbReference>
<keyword id="KW-1003">Cell membrane</keyword>
<keyword id="KW-1015">Disulfide bond</keyword>
<keyword id="KW-0297">G-protein coupled receptor</keyword>
<keyword id="KW-0325">Glycoprotein</keyword>
<keyword id="KW-0472">Membrane</keyword>
<keyword id="KW-0552">Olfaction</keyword>
<keyword id="KW-0675">Receptor</keyword>
<keyword id="KW-1185">Reference proteome</keyword>
<keyword id="KW-0716">Sensory transduction</keyword>
<keyword id="KW-0807">Transducer</keyword>
<keyword id="KW-0812">Transmembrane</keyword>
<keyword id="KW-1133">Transmembrane helix</keyword>
<accession>P58173</accession>
<accession>A0A126GW55</accession>
<accession>O43883</accession>
<accession>Q6IF89</accession>
<accession>Q9H5B0</accession>
<name>OR2B6_HUMAN</name>
<protein>
    <recommendedName>
        <fullName evidence="3">Olfactory receptor 2B6</fullName>
    </recommendedName>
    <alternativeName>
        <fullName>Hs6M1-32</fullName>
    </alternativeName>
    <alternativeName>
        <fullName evidence="6">Olfactory receptor 2B1</fullName>
    </alternativeName>
    <alternativeName>
        <fullName evidence="6">Olfactory receptor 2B5</fullName>
    </alternativeName>
    <alternativeName>
        <fullName evidence="6">Olfactory receptor 5-40</fullName>
        <shortName evidence="6">OR5-40</shortName>
    </alternativeName>
    <alternativeName>
        <fullName evidence="6">Olfactory receptor 6-31</fullName>
        <shortName evidence="6">OR6-31</shortName>
    </alternativeName>
    <alternativeName>
        <fullName>Olfactory receptor OR6-4</fullName>
    </alternativeName>
</protein>
<comment type="function">
    <text evidence="3">Odorant receptor.</text>
</comment>
<comment type="subcellular location">
    <subcellularLocation>
        <location evidence="1">Cell membrane</location>
        <topology evidence="1">Multi-pass membrane protein</topology>
    </subcellularLocation>
</comment>
<comment type="similarity">
    <text evidence="2">Belongs to the G-protein coupled receptor 1 family.</text>
</comment>
<comment type="online information" name="Human Olfactory Receptor Data Exploratorium (HORDE)">
    <link uri="https://genome.weizmann.ac.il/horde/card/index/symbol:OR2B6"/>
</comment>
<organism>
    <name type="scientific">Homo sapiens</name>
    <name type="common">Human</name>
    <dbReference type="NCBI Taxonomy" id="9606"/>
    <lineage>
        <taxon>Eukaryota</taxon>
        <taxon>Metazoa</taxon>
        <taxon>Chordata</taxon>
        <taxon>Craniata</taxon>
        <taxon>Vertebrata</taxon>
        <taxon>Euteleostomi</taxon>
        <taxon>Mammalia</taxon>
        <taxon>Eutheria</taxon>
        <taxon>Euarchontoglires</taxon>
        <taxon>Primates</taxon>
        <taxon>Haplorrhini</taxon>
        <taxon>Catarrhini</taxon>
        <taxon>Hominidae</taxon>
        <taxon>Homo</taxon>
    </lineage>
</organism>
<sequence>MNWVNDSIIQEFILLGFSDRPWLEFPLLVVFLISYTVTIFGNLTIILVSRLDTKLHTPMYFFLTNLSLLDLCYTTCTVPQMLVNLCSIRKVISYRGCVAQLFIFLALGATEYLLLAVMSFDRFVAICRPLHYSVIMHQRLCLQLAAASWVTGFSNSVWLSTLTLQLPLCDPYVIDHFLCEVPALLKLSCVETTANEAELFLVSELFHLIPLTLILISYAFIVRAVLRIQSAEGRQKAFGTCGSHLIVVSLFYSTAVSVYLQPPSPSSKDQGKMVSLFYGIIAPMLNPLIYTLRNKEVKEGFKRLVARVFLIKK</sequence>
<proteinExistence type="evidence at transcript level"/>
<reference evidence="4" key="1">
    <citation type="submission" date="2014-12" db="EMBL/GenBank/DDBJ databases">
        <title>Human Olfactory Receptor Responses to Odorants.</title>
        <authorList>
            <person name="Mainland J.D."/>
            <person name="Li Y.R."/>
            <person name="Zhou T."/>
            <person name="Liu W.L.L."/>
            <person name="Matsunami H."/>
        </authorList>
    </citation>
    <scope>NUCLEOTIDE SEQUENCE [GENOMIC DNA]</scope>
</reference>
<reference key="2">
    <citation type="journal article" date="2003" name="Nature">
        <title>The DNA sequence and analysis of human chromosome 6.</title>
        <authorList>
            <person name="Mungall A.J."/>
            <person name="Palmer S.A."/>
            <person name="Sims S.K."/>
            <person name="Edwards C.A."/>
            <person name="Ashurst J.L."/>
            <person name="Wilming L."/>
            <person name="Jones M.C."/>
            <person name="Horton R."/>
            <person name="Hunt S.E."/>
            <person name="Scott C.E."/>
            <person name="Gilbert J.G.R."/>
            <person name="Clamp M.E."/>
            <person name="Bethel G."/>
            <person name="Milne S."/>
            <person name="Ainscough R."/>
            <person name="Almeida J.P."/>
            <person name="Ambrose K.D."/>
            <person name="Andrews T.D."/>
            <person name="Ashwell R.I.S."/>
            <person name="Babbage A.K."/>
            <person name="Bagguley C.L."/>
            <person name="Bailey J."/>
            <person name="Banerjee R."/>
            <person name="Barker D.J."/>
            <person name="Barlow K.F."/>
            <person name="Bates K."/>
            <person name="Beare D.M."/>
            <person name="Beasley H."/>
            <person name="Beasley O."/>
            <person name="Bird C.P."/>
            <person name="Blakey S.E."/>
            <person name="Bray-Allen S."/>
            <person name="Brook J."/>
            <person name="Brown A.J."/>
            <person name="Brown J.Y."/>
            <person name="Burford D.C."/>
            <person name="Burrill W."/>
            <person name="Burton J."/>
            <person name="Carder C."/>
            <person name="Carter N.P."/>
            <person name="Chapman J.C."/>
            <person name="Clark S.Y."/>
            <person name="Clark G."/>
            <person name="Clee C.M."/>
            <person name="Clegg S."/>
            <person name="Cobley V."/>
            <person name="Collier R.E."/>
            <person name="Collins J.E."/>
            <person name="Colman L.K."/>
            <person name="Corby N.R."/>
            <person name="Coville G.J."/>
            <person name="Culley K.M."/>
            <person name="Dhami P."/>
            <person name="Davies J."/>
            <person name="Dunn M."/>
            <person name="Earthrowl M.E."/>
            <person name="Ellington A.E."/>
            <person name="Evans K.A."/>
            <person name="Faulkner L."/>
            <person name="Francis M.D."/>
            <person name="Frankish A."/>
            <person name="Frankland J."/>
            <person name="French L."/>
            <person name="Garner P."/>
            <person name="Garnett J."/>
            <person name="Ghori M.J."/>
            <person name="Gilby L.M."/>
            <person name="Gillson C.J."/>
            <person name="Glithero R.J."/>
            <person name="Grafham D.V."/>
            <person name="Grant M."/>
            <person name="Gribble S."/>
            <person name="Griffiths C."/>
            <person name="Griffiths M.N.D."/>
            <person name="Hall R."/>
            <person name="Halls K.S."/>
            <person name="Hammond S."/>
            <person name="Harley J.L."/>
            <person name="Hart E.A."/>
            <person name="Heath P.D."/>
            <person name="Heathcott R."/>
            <person name="Holmes S.J."/>
            <person name="Howden P.J."/>
            <person name="Howe K.L."/>
            <person name="Howell G.R."/>
            <person name="Huckle E."/>
            <person name="Humphray S.J."/>
            <person name="Humphries M.D."/>
            <person name="Hunt A.R."/>
            <person name="Johnson C.M."/>
            <person name="Joy A.A."/>
            <person name="Kay M."/>
            <person name="Keenan S.J."/>
            <person name="Kimberley A.M."/>
            <person name="King A."/>
            <person name="Laird G.K."/>
            <person name="Langford C."/>
            <person name="Lawlor S."/>
            <person name="Leongamornlert D.A."/>
            <person name="Leversha M."/>
            <person name="Lloyd C.R."/>
            <person name="Lloyd D.M."/>
            <person name="Loveland J.E."/>
            <person name="Lovell J."/>
            <person name="Martin S."/>
            <person name="Mashreghi-Mohammadi M."/>
            <person name="Maslen G.L."/>
            <person name="Matthews L."/>
            <person name="McCann O.T."/>
            <person name="McLaren S.J."/>
            <person name="McLay K."/>
            <person name="McMurray A."/>
            <person name="Moore M.J.F."/>
            <person name="Mullikin J.C."/>
            <person name="Niblett D."/>
            <person name="Nickerson T."/>
            <person name="Novik K.L."/>
            <person name="Oliver K."/>
            <person name="Overton-Larty E.K."/>
            <person name="Parker A."/>
            <person name="Patel R."/>
            <person name="Pearce A.V."/>
            <person name="Peck A.I."/>
            <person name="Phillimore B.J.C.T."/>
            <person name="Phillips S."/>
            <person name="Plumb R.W."/>
            <person name="Porter K.M."/>
            <person name="Ramsey Y."/>
            <person name="Ranby S.A."/>
            <person name="Rice C.M."/>
            <person name="Ross M.T."/>
            <person name="Searle S.M."/>
            <person name="Sehra H.K."/>
            <person name="Sheridan E."/>
            <person name="Skuce C.D."/>
            <person name="Smith S."/>
            <person name="Smith M."/>
            <person name="Spraggon L."/>
            <person name="Squares S.L."/>
            <person name="Steward C.A."/>
            <person name="Sycamore N."/>
            <person name="Tamlyn-Hall G."/>
            <person name="Tester J."/>
            <person name="Theaker A.J."/>
            <person name="Thomas D.W."/>
            <person name="Thorpe A."/>
            <person name="Tracey A."/>
            <person name="Tromans A."/>
            <person name="Tubby B."/>
            <person name="Wall M."/>
            <person name="Wallis J.M."/>
            <person name="West A.P."/>
            <person name="White S.S."/>
            <person name="Whitehead S.L."/>
            <person name="Whittaker H."/>
            <person name="Wild A."/>
            <person name="Willey D.J."/>
            <person name="Wilmer T.E."/>
            <person name="Wood J.M."/>
            <person name="Wray P.W."/>
            <person name="Wyatt J.C."/>
            <person name="Young L."/>
            <person name="Younger R.M."/>
            <person name="Bentley D.R."/>
            <person name="Coulson A."/>
            <person name="Durbin R.M."/>
            <person name="Hubbard T."/>
            <person name="Sulston J.E."/>
            <person name="Dunham I."/>
            <person name="Rogers J."/>
            <person name="Beck S."/>
        </authorList>
    </citation>
    <scope>NUCLEOTIDE SEQUENCE [LARGE SCALE GENOMIC DNA]</scope>
</reference>
<reference evidence="5" key="3">
    <citation type="journal article" date="2001" name="Science">
        <title>The sequence of the human genome.</title>
        <authorList>
            <person name="Venter J.C."/>
            <person name="Adams M.D."/>
            <person name="Myers E.W."/>
            <person name="Li P.W."/>
            <person name="Mural R.J."/>
            <person name="Sutton G.G."/>
            <person name="Smith H.O."/>
            <person name="Yandell M."/>
            <person name="Evans C.A."/>
            <person name="Holt R.A."/>
            <person name="Gocayne J.D."/>
            <person name="Amanatides P."/>
            <person name="Ballew R.M."/>
            <person name="Huson D.H."/>
            <person name="Wortman J.R."/>
            <person name="Zhang Q."/>
            <person name="Kodira C.D."/>
            <person name="Zheng X.H."/>
            <person name="Chen L."/>
            <person name="Skupski M."/>
            <person name="Subramanian G."/>
            <person name="Thomas P.D."/>
            <person name="Zhang J."/>
            <person name="Gabor Miklos G.L."/>
            <person name="Nelson C."/>
            <person name="Broder S."/>
            <person name="Clark A.G."/>
            <person name="Nadeau J."/>
            <person name="McKusick V.A."/>
            <person name="Zinder N."/>
            <person name="Levine A.J."/>
            <person name="Roberts R.J."/>
            <person name="Simon M."/>
            <person name="Slayman C."/>
            <person name="Hunkapiller M."/>
            <person name="Bolanos R."/>
            <person name="Delcher A."/>
            <person name="Dew I."/>
            <person name="Fasulo D."/>
            <person name="Flanigan M."/>
            <person name="Florea L."/>
            <person name="Halpern A."/>
            <person name="Hannenhalli S."/>
            <person name="Kravitz S."/>
            <person name="Levy S."/>
            <person name="Mobarry C."/>
            <person name="Reinert K."/>
            <person name="Remington K."/>
            <person name="Abu-Threideh J."/>
            <person name="Beasley E."/>
            <person name="Biddick K."/>
            <person name="Bonazzi V."/>
            <person name="Brandon R."/>
            <person name="Cargill M."/>
            <person name="Chandramouliswaran I."/>
            <person name="Charlab R."/>
            <person name="Chaturvedi K."/>
            <person name="Deng Z."/>
            <person name="Di Francesco V."/>
            <person name="Dunn P."/>
            <person name="Eilbeck K."/>
            <person name="Evangelista C."/>
            <person name="Gabrielian A.E."/>
            <person name="Gan W."/>
            <person name="Ge W."/>
            <person name="Gong F."/>
            <person name="Gu Z."/>
            <person name="Guan P."/>
            <person name="Heiman T.J."/>
            <person name="Higgins M.E."/>
            <person name="Ji R.R."/>
            <person name="Ke Z."/>
            <person name="Ketchum K.A."/>
            <person name="Lai Z."/>
            <person name="Lei Y."/>
            <person name="Li Z."/>
            <person name="Li J."/>
            <person name="Liang Y."/>
            <person name="Lin X."/>
            <person name="Lu F."/>
            <person name="Merkulov G.V."/>
            <person name="Milshina N."/>
            <person name="Moore H.M."/>
            <person name="Naik A.K."/>
            <person name="Narayan V.A."/>
            <person name="Neelam B."/>
            <person name="Nusskern D."/>
            <person name="Rusch D.B."/>
            <person name="Salzberg S."/>
            <person name="Shao W."/>
            <person name="Shue B."/>
            <person name="Sun J."/>
            <person name="Wang Z."/>
            <person name="Wang A."/>
            <person name="Wang X."/>
            <person name="Wang J."/>
            <person name="Wei M."/>
            <person name="Wides R."/>
            <person name="Xiao C."/>
            <person name="Yan C."/>
            <person name="Yao A."/>
            <person name="Ye J."/>
            <person name="Zhan M."/>
            <person name="Zhang W."/>
            <person name="Zhang H."/>
            <person name="Zhao Q."/>
            <person name="Zheng L."/>
            <person name="Zhong F."/>
            <person name="Zhong W."/>
            <person name="Zhu S."/>
            <person name="Zhao S."/>
            <person name="Gilbert D."/>
            <person name="Baumhueter S."/>
            <person name="Spier G."/>
            <person name="Carter C."/>
            <person name="Cravchik A."/>
            <person name="Woodage T."/>
            <person name="Ali F."/>
            <person name="An H."/>
            <person name="Awe A."/>
            <person name="Baldwin D."/>
            <person name="Baden H."/>
            <person name="Barnstead M."/>
            <person name="Barrow I."/>
            <person name="Beeson K."/>
            <person name="Busam D."/>
            <person name="Carver A."/>
            <person name="Center A."/>
            <person name="Cheng M.L."/>
            <person name="Curry L."/>
            <person name="Danaher S."/>
            <person name="Davenport L."/>
            <person name="Desilets R."/>
            <person name="Dietz S."/>
            <person name="Dodson K."/>
            <person name="Doup L."/>
            <person name="Ferriera S."/>
            <person name="Garg N."/>
            <person name="Gluecksmann A."/>
            <person name="Hart B."/>
            <person name="Haynes J."/>
            <person name="Haynes C."/>
            <person name="Heiner C."/>
            <person name="Hladun S."/>
            <person name="Hostin D."/>
            <person name="Houck J."/>
            <person name="Howland T."/>
            <person name="Ibegwam C."/>
            <person name="Johnson J."/>
            <person name="Kalush F."/>
            <person name="Kline L."/>
            <person name="Koduru S."/>
            <person name="Love A."/>
            <person name="Mann F."/>
            <person name="May D."/>
            <person name="McCawley S."/>
            <person name="McIntosh T."/>
            <person name="McMullen I."/>
            <person name="Moy M."/>
            <person name="Moy L."/>
            <person name="Murphy B."/>
            <person name="Nelson K."/>
            <person name="Pfannkoch C."/>
            <person name="Pratts E."/>
            <person name="Puri V."/>
            <person name="Qureshi H."/>
            <person name="Reardon M."/>
            <person name="Rodriguez R."/>
            <person name="Rogers Y.H."/>
            <person name="Romblad D."/>
            <person name="Ruhfel B."/>
            <person name="Scott R."/>
            <person name="Sitter C."/>
            <person name="Smallwood M."/>
            <person name="Stewart E."/>
            <person name="Strong R."/>
            <person name="Suh E."/>
            <person name="Thomas R."/>
            <person name="Tint N.N."/>
            <person name="Tse S."/>
            <person name="Vech C."/>
            <person name="Wang G."/>
            <person name="Wetter J."/>
            <person name="Williams S."/>
            <person name="Williams M."/>
            <person name="Windsor S."/>
            <person name="Winn-Deen E."/>
            <person name="Wolfe K."/>
            <person name="Zaveri J."/>
            <person name="Zaveri K."/>
            <person name="Abril J.F."/>
            <person name="Guigo R."/>
            <person name="Campbell M.J."/>
            <person name="Sjolander K.V."/>
            <person name="Karlak B."/>
            <person name="Kejariwal A."/>
            <person name="Mi H."/>
            <person name="Lazareva B."/>
            <person name="Hatton T."/>
            <person name="Narechania A."/>
            <person name="Diemer K."/>
            <person name="Muruganujan A."/>
            <person name="Guo N."/>
            <person name="Sato S."/>
            <person name="Bafna V."/>
            <person name="Istrail S."/>
            <person name="Lippert R."/>
            <person name="Schwartz R."/>
            <person name="Walenz B."/>
            <person name="Yooseph S."/>
            <person name="Allen D."/>
            <person name="Basu A."/>
            <person name="Baxendale J."/>
            <person name="Blick L."/>
            <person name="Caminha M."/>
            <person name="Carnes-Stine J."/>
            <person name="Caulk P."/>
            <person name="Chiang Y.H."/>
            <person name="Coyne M."/>
            <person name="Dahlke C."/>
            <person name="Mays A."/>
            <person name="Dombroski M."/>
            <person name="Donnelly M."/>
            <person name="Ely D."/>
            <person name="Esparham S."/>
            <person name="Fosler C."/>
            <person name="Gire H."/>
            <person name="Glanowski S."/>
            <person name="Glasser K."/>
            <person name="Glodek A."/>
            <person name="Gorokhov M."/>
            <person name="Graham K."/>
            <person name="Gropman B."/>
            <person name="Harris M."/>
            <person name="Heil J."/>
            <person name="Henderson S."/>
            <person name="Hoover J."/>
            <person name="Jennings D."/>
            <person name="Jordan C."/>
            <person name="Jordan J."/>
            <person name="Kasha J."/>
            <person name="Kagan L."/>
            <person name="Kraft C."/>
            <person name="Levitsky A."/>
            <person name="Lewis M."/>
            <person name="Liu X."/>
            <person name="Lopez J."/>
            <person name="Ma D."/>
            <person name="Majoros W."/>
            <person name="McDaniel J."/>
            <person name="Murphy S."/>
            <person name="Newman M."/>
            <person name="Nguyen T."/>
            <person name="Nguyen N."/>
            <person name="Nodell M."/>
            <person name="Pan S."/>
            <person name="Peck J."/>
            <person name="Peterson M."/>
            <person name="Rowe W."/>
            <person name="Sanders R."/>
            <person name="Scott J."/>
            <person name="Simpson M."/>
            <person name="Smith T."/>
            <person name="Sprague A."/>
            <person name="Stockwell T."/>
            <person name="Turner R."/>
            <person name="Venter E."/>
            <person name="Wang M."/>
            <person name="Wen M."/>
            <person name="Wu D."/>
            <person name="Wu M."/>
            <person name="Xia A."/>
            <person name="Zandieh A."/>
            <person name="Zhu X."/>
        </authorList>
    </citation>
    <scope>NUCLEOTIDE SEQUENCE [LARGE SCALE GENOMIC DNA]</scope>
</reference>
<reference key="4">
    <citation type="journal article" date="2004" name="Genome Res.">
        <title>The status, quality, and expansion of the NIH full-length cDNA project: the Mammalian Gene Collection (MGC).</title>
        <authorList>
            <consortium name="The MGC Project Team"/>
        </authorList>
    </citation>
    <scope>NUCLEOTIDE SEQUENCE [LARGE SCALE MRNA]</scope>
</reference>
<reference key="5">
    <citation type="journal article" date="1998" name="Nat. Genet.">
        <title>Distribution of olfactory receptor genes in the human genome.</title>
        <authorList>
            <person name="Rouquier S."/>
            <person name="Taviaux S."/>
            <person name="Trask B.J."/>
            <person name="Brand-Arpon V."/>
            <person name="Van den Engh G."/>
            <person name="Demaille J.G."/>
            <person name="Giorgi D."/>
        </authorList>
    </citation>
    <scope>NUCLEOTIDE SEQUENCE [GENOMIC DNA] OF 68-283</scope>
</reference>
<reference key="6">
    <citation type="journal article" date="2004" name="Proc. Natl. Acad. Sci. U.S.A.">
        <title>The human olfactory receptor gene family.</title>
        <authorList>
            <person name="Malnic B."/>
            <person name="Godfrey P.A."/>
            <person name="Buck L.B."/>
        </authorList>
    </citation>
    <scope>IDENTIFICATION</scope>
</reference>
<reference key="7">
    <citation type="journal article" date="2004" name="Proc. Natl. Acad. Sci. U.S.A.">
        <authorList>
            <person name="Malnic B."/>
            <person name="Godfrey P.A."/>
            <person name="Buck L.B."/>
        </authorList>
    </citation>
    <scope>ERRATUM OF PUBMED:14983052</scope>
</reference>
<evidence type="ECO:0000255" key="1"/>
<evidence type="ECO:0000255" key="2">
    <source>
        <dbReference type="PROSITE-ProRule" id="PRU00521"/>
    </source>
</evidence>
<evidence type="ECO:0000305" key="3"/>
<evidence type="ECO:0000312" key="4">
    <source>
        <dbReference type="EMBL" id="ALI87627.1"/>
    </source>
</evidence>
<evidence type="ECO:0000312" key="5">
    <source>
        <dbReference type="EMBL" id="EAX03127.1"/>
    </source>
</evidence>
<evidence type="ECO:0000312" key="6">
    <source>
        <dbReference type="HGNC" id="HGNC:8241"/>
    </source>
</evidence>
<feature type="chain" id="PRO_0000150462" description="Olfactory receptor 2B6">
    <location>
        <begin position="1"/>
        <end position="313"/>
    </location>
</feature>
<feature type="topological domain" description="Extracellular" evidence="1">
    <location>
        <begin position="1"/>
        <end position="25"/>
    </location>
</feature>
<feature type="transmembrane region" description="Helical; Name=1" evidence="1">
    <location>
        <begin position="26"/>
        <end position="49"/>
    </location>
</feature>
<feature type="topological domain" description="Cytoplasmic" evidence="1">
    <location>
        <begin position="50"/>
        <end position="57"/>
    </location>
</feature>
<feature type="transmembrane region" description="Helical; Name=2" evidence="1">
    <location>
        <begin position="58"/>
        <end position="79"/>
    </location>
</feature>
<feature type="topological domain" description="Extracellular" evidence="1">
    <location>
        <begin position="80"/>
        <end position="100"/>
    </location>
</feature>
<feature type="transmembrane region" description="Helical; Name=3" evidence="1">
    <location>
        <begin position="101"/>
        <end position="120"/>
    </location>
</feature>
<feature type="topological domain" description="Cytoplasmic" evidence="1">
    <location>
        <begin position="121"/>
        <end position="139"/>
    </location>
</feature>
<feature type="transmembrane region" description="Helical; Name=4" evidence="1">
    <location>
        <begin position="140"/>
        <end position="158"/>
    </location>
</feature>
<feature type="topological domain" description="Extracellular" evidence="1">
    <location>
        <begin position="159"/>
        <end position="195"/>
    </location>
</feature>
<feature type="transmembrane region" description="Helical; Name=5" evidence="1">
    <location>
        <begin position="196"/>
        <end position="219"/>
    </location>
</feature>
<feature type="topological domain" description="Cytoplasmic" evidence="1">
    <location>
        <begin position="220"/>
        <end position="236"/>
    </location>
</feature>
<feature type="transmembrane region" description="Helical; Name=6" evidence="1">
    <location>
        <begin position="237"/>
        <end position="259"/>
    </location>
</feature>
<feature type="topological domain" description="Extracellular" evidence="1">
    <location>
        <begin position="260"/>
        <end position="272"/>
    </location>
</feature>
<feature type="transmembrane region" description="Helical; Name=7" evidence="1">
    <location>
        <begin position="273"/>
        <end position="292"/>
    </location>
</feature>
<feature type="topological domain" description="Cytoplasmic" evidence="1">
    <location>
        <begin position="293"/>
        <end position="313"/>
    </location>
</feature>
<feature type="glycosylation site" description="N-linked (GlcNAc...) asparagine" evidence="1">
    <location>
        <position position="5"/>
    </location>
</feature>
<feature type="disulfide bond" evidence="2">
    <location>
        <begin position="97"/>
        <end position="189"/>
    </location>
</feature>
<feature type="sequence variant" id="VAR_053131" description="In dbSNP:rs7767176.">
    <original>V</original>
    <variation>I</variation>
    <location>
        <position position="117"/>
    </location>
</feature>
<feature type="sequence variant" id="VAR_024090" description="In dbSNP:rs9380030.">
    <original>Q</original>
    <variation>R</variation>
    <location>
        <position position="270"/>
    </location>
</feature>